<dbReference type="EC" id="2.5.1.16" evidence="1"/>
<dbReference type="EMBL" id="CP001113">
    <property type="protein sequence ID" value="ACF64951.1"/>
    <property type="molecule type" value="Genomic_DNA"/>
</dbReference>
<dbReference type="RefSeq" id="WP_000829973.1">
    <property type="nucleotide sequence ID" value="NZ_CCMR01000003.1"/>
</dbReference>
<dbReference type="SMR" id="B4SU91"/>
<dbReference type="KEGG" id="see:SNSL254_A0182"/>
<dbReference type="HOGENOM" id="CLU_048199_0_0_6"/>
<dbReference type="UniPathway" id="UPA00248">
    <property type="reaction ID" value="UER00314"/>
</dbReference>
<dbReference type="Proteomes" id="UP000008824">
    <property type="component" value="Chromosome"/>
</dbReference>
<dbReference type="GO" id="GO:0005829">
    <property type="term" value="C:cytosol"/>
    <property type="evidence" value="ECO:0007669"/>
    <property type="project" value="TreeGrafter"/>
</dbReference>
<dbReference type="GO" id="GO:0004766">
    <property type="term" value="F:spermidine synthase activity"/>
    <property type="evidence" value="ECO:0007669"/>
    <property type="project" value="UniProtKB-UniRule"/>
</dbReference>
<dbReference type="GO" id="GO:0008295">
    <property type="term" value="P:spermidine biosynthetic process"/>
    <property type="evidence" value="ECO:0007669"/>
    <property type="project" value="UniProtKB-UniRule"/>
</dbReference>
<dbReference type="CDD" id="cd02440">
    <property type="entry name" value="AdoMet_MTases"/>
    <property type="match status" value="1"/>
</dbReference>
<dbReference type="FunFam" id="2.30.140.10:FF:000002">
    <property type="entry name" value="Polyamine aminopropyltransferase"/>
    <property type="match status" value="1"/>
</dbReference>
<dbReference type="FunFam" id="3.40.50.150:FF:000026">
    <property type="entry name" value="Polyamine aminopropyltransferase"/>
    <property type="match status" value="1"/>
</dbReference>
<dbReference type="Gene3D" id="2.30.140.10">
    <property type="entry name" value="Spermidine synthase, tetramerisation domain"/>
    <property type="match status" value="1"/>
</dbReference>
<dbReference type="Gene3D" id="3.40.50.150">
    <property type="entry name" value="Vaccinia Virus protein VP39"/>
    <property type="match status" value="1"/>
</dbReference>
<dbReference type="HAMAP" id="MF_00198">
    <property type="entry name" value="Spermidine_synth"/>
    <property type="match status" value="1"/>
</dbReference>
<dbReference type="InterPro" id="IPR030374">
    <property type="entry name" value="PABS"/>
</dbReference>
<dbReference type="InterPro" id="IPR030373">
    <property type="entry name" value="PABS_CS"/>
</dbReference>
<dbReference type="InterPro" id="IPR029063">
    <property type="entry name" value="SAM-dependent_MTases_sf"/>
</dbReference>
<dbReference type="InterPro" id="IPR001045">
    <property type="entry name" value="Spermi_synthase"/>
</dbReference>
<dbReference type="InterPro" id="IPR035246">
    <property type="entry name" value="Spermidine_synt_N"/>
</dbReference>
<dbReference type="InterPro" id="IPR037163">
    <property type="entry name" value="Spermidine_synt_N_sf"/>
</dbReference>
<dbReference type="NCBIfam" id="NF037959">
    <property type="entry name" value="MFS_SpdSyn"/>
    <property type="match status" value="1"/>
</dbReference>
<dbReference type="NCBIfam" id="NF002010">
    <property type="entry name" value="PRK00811.1"/>
    <property type="match status" value="1"/>
</dbReference>
<dbReference type="NCBIfam" id="TIGR00417">
    <property type="entry name" value="speE"/>
    <property type="match status" value="1"/>
</dbReference>
<dbReference type="PANTHER" id="PTHR11558:SF11">
    <property type="entry name" value="SPERMIDINE SYNTHASE"/>
    <property type="match status" value="1"/>
</dbReference>
<dbReference type="PANTHER" id="PTHR11558">
    <property type="entry name" value="SPERMIDINE/SPERMINE SYNTHASE"/>
    <property type="match status" value="1"/>
</dbReference>
<dbReference type="Pfam" id="PF17284">
    <property type="entry name" value="Spermine_synt_N"/>
    <property type="match status" value="1"/>
</dbReference>
<dbReference type="Pfam" id="PF01564">
    <property type="entry name" value="Spermine_synth"/>
    <property type="match status" value="1"/>
</dbReference>
<dbReference type="SUPFAM" id="SSF53335">
    <property type="entry name" value="S-adenosyl-L-methionine-dependent methyltransferases"/>
    <property type="match status" value="1"/>
</dbReference>
<dbReference type="PROSITE" id="PS01330">
    <property type="entry name" value="PABS_1"/>
    <property type="match status" value="1"/>
</dbReference>
<dbReference type="PROSITE" id="PS51006">
    <property type="entry name" value="PABS_2"/>
    <property type="match status" value="1"/>
</dbReference>
<feature type="chain" id="PRO_1000099298" description="Polyamine aminopropyltransferase">
    <location>
        <begin position="1"/>
        <end position="286"/>
    </location>
</feature>
<feature type="domain" description="PABS" evidence="1">
    <location>
        <begin position="5"/>
        <end position="238"/>
    </location>
</feature>
<feature type="active site" description="Proton acceptor" evidence="1">
    <location>
        <position position="158"/>
    </location>
</feature>
<feature type="binding site" evidence="1">
    <location>
        <position position="33"/>
    </location>
    <ligand>
        <name>S-methyl-5'-thioadenosine</name>
        <dbReference type="ChEBI" id="CHEBI:17509"/>
    </ligand>
</feature>
<feature type="binding site" evidence="1">
    <location>
        <position position="64"/>
    </location>
    <ligand>
        <name>spermidine</name>
        <dbReference type="ChEBI" id="CHEBI:57834"/>
    </ligand>
</feature>
<feature type="binding site" evidence="1">
    <location>
        <position position="88"/>
    </location>
    <ligand>
        <name>spermidine</name>
        <dbReference type="ChEBI" id="CHEBI:57834"/>
    </ligand>
</feature>
<feature type="binding site" evidence="1">
    <location>
        <position position="108"/>
    </location>
    <ligand>
        <name>S-methyl-5'-thioadenosine</name>
        <dbReference type="ChEBI" id="CHEBI:17509"/>
    </ligand>
</feature>
<feature type="binding site" evidence="1">
    <location>
        <begin position="140"/>
        <end position="141"/>
    </location>
    <ligand>
        <name>S-methyl-5'-thioadenosine</name>
        <dbReference type="ChEBI" id="CHEBI:17509"/>
    </ligand>
</feature>
<feature type="binding site" evidence="1">
    <location>
        <begin position="158"/>
        <end position="161"/>
    </location>
    <ligand>
        <name>spermidine</name>
        <dbReference type="ChEBI" id="CHEBI:57834"/>
    </ligand>
</feature>
<feature type="binding site" evidence="1">
    <location>
        <position position="165"/>
    </location>
    <ligand>
        <name>S-methyl-5'-thioadenosine</name>
        <dbReference type="ChEBI" id="CHEBI:17509"/>
    </ligand>
</feature>
<comment type="function">
    <text evidence="1">Catalyzes the irreversible transfer of a propylamine group from the amino donor S-adenosylmethioninamine (decarboxy-AdoMet) to putrescine (1,4-diaminobutane) to yield spermidine.</text>
</comment>
<comment type="catalytic activity">
    <reaction evidence="1">
        <text>S-adenosyl 3-(methylsulfanyl)propylamine + putrescine = S-methyl-5'-thioadenosine + spermidine + H(+)</text>
        <dbReference type="Rhea" id="RHEA:12721"/>
        <dbReference type="ChEBI" id="CHEBI:15378"/>
        <dbReference type="ChEBI" id="CHEBI:17509"/>
        <dbReference type="ChEBI" id="CHEBI:57443"/>
        <dbReference type="ChEBI" id="CHEBI:57834"/>
        <dbReference type="ChEBI" id="CHEBI:326268"/>
        <dbReference type="EC" id="2.5.1.16"/>
    </reaction>
</comment>
<comment type="pathway">
    <text evidence="1">Amine and polyamine biosynthesis; spermidine biosynthesis; spermidine from putrescine: step 1/1.</text>
</comment>
<comment type="subunit">
    <text evidence="1">Homodimer or homotetramer.</text>
</comment>
<comment type="subcellular location">
    <subcellularLocation>
        <location evidence="1">Cytoplasm</location>
    </subcellularLocation>
</comment>
<comment type="similarity">
    <text evidence="1">Belongs to the spermidine/spermine synthase family.</text>
</comment>
<organism>
    <name type="scientific">Salmonella newport (strain SL254)</name>
    <dbReference type="NCBI Taxonomy" id="423368"/>
    <lineage>
        <taxon>Bacteria</taxon>
        <taxon>Pseudomonadati</taxon>
        <taxon>Pseudomonadota</taxon>
        <taxon>Gammaproteobacteria</taxon>
        <taxon>Enterobacterales</taxon>
        <taxon>Enterobacteriaceae</taxon>
        <taxon>Salmonella</taxon>
    </lineage>
</organism>
<proteinExistence type="inferred from homology"/>
<keyword id="KW-0963">Cytoplasm</keyword>
<keyword id="KW-0620">Polyamine biosynthesis</keyword>
<keyword id="KW-0745">Spermidine biosynthesis</keyword>
<keyword id="KW-0808">Transferase</keyword>
<sequence>MAENTMWHETLHDQFGQYFAVDNVLYHEKTDHQDLIIFENAAFGRVMALDGVVQTTERDEFIYHEMMTHVPLLAHGHAKHVLIIGGGDGAMLREVTRHKNVETITMVEIDAGVVSFCRQYLPNHNAGSYDDPRFTLVIDDGVNFVNQTHQTFDVIISDCTDPIGPGESLFTSAFYEGCKRCLNPGGIFVAQNGVCFLQQDEALDSHRKLSHYFSDVGFYQAAIPTYYGGIMTFAWATDNGALRHLSSEIIQARFHAAGLKCRYYNPAIHAAAFALPQYLHDALSAQ</sequence>
<protein>
    <recommendedName>
        <fullName evidence="1">Polyamine aminopropyltransferase</fullName>
    </recommendedName>
    <alternativeName>
        <fullName evidence="1">Putrescine aminopropyltransferase</fullName>
        <shortName evidence="1">PAPT</shortName>
    </alternativeName>
    <alternativeName>
        <fullName evidence="1">Spermidine synthase</fullName>
        <shortName evidence="1">SPDS</shortName>
        <shortName evidence="1">SPDSY</shortName>
        <ecNumber evidence="1">2.5.1.16</ecNumber>
    </alternativeName>
</protein>
<name>SPEE_SALNS</name>
<evidence type="ECO:0000255" key="1">
    <source>
        <dbReference type="HAMAP-Rule" id="MF_00198"/>
    </source>
</evidence>
<reference key="1">
    <citation type="journal article" date="2011" name="J. Bacteriol.">
        <title>Comparative genomics of 28 Salmonella enterica isolates: evidence for CRISPR-mediated adaptive sublineage evolution.</title>
        <authorList>
            <person name="Fricke W.F."/>
            <person name="Mammel M.K."/>
            <person name="McDermott P.F."/>
            <person name="Tartera C."/>
            <person name="White D.G."/>
            <person name="Leclerc J.E."/>
            <person name="Ravel J."/>
            <person name="Cebula T.A."/>
        </authorList>
    </citation>
    <scope>NUCLEOTIDE SEQUENCE [LARGE SCALE GENOMIC DNA]</scope>
    <source>
        <strain>SL254</strain>
    </source>
</reference>
<accession>B4SU91</accession>
<gene>
    <name evidence="1" type="primary">speE</name>
    <name type="ordered locus">SNSL254_A0182</name>
</gene>